<accession>D9HP27</accession>
<gene>
    <name type="primary">CNR11</name>
</gene>
<organism>
    <name type="scientific">Zea mays</name>
    <name type="common">Maize</name>
    <dbReference type="NCBI Taxonomy" id="4577"/>
    <lineage>
        <taxon>Eukaryota</taxon>
        <taxon>Viridiplantae</taxon>
        <taxon>Streptophyta</taxon>
        <taxon>Embryophyta</taxon>
        <taxon>Tracheophyta</taxon>
        <taxon>Spermatophyta</taxon>
        <taxon>Magnoliopsida</taxon>
        <taxon>Liliopsida</taxon>
        <taxon>Poales</taxon>
        <taxon>Poaceae</taxon>
        <taxon>PACMAD clade</taxon>
        <taxon>Panicoideae</taxon>
        <taxon>Andropogonodae</taxon>
        <taxon>Andropogoneae</taxon>
        <taxon>Tripsacinae</taxon>
        <taxon>Zea</taxon>
    </lineage>
</organism>
<name>CNR11_MAIZE</name>
<proteinExistence type="evidence at transcript level"/>
<reference key="1">
    <citation type="journal article" date="2010" name="Plant Cell">
        <title>Cell Number Regulator1 affects plant and organ size in maize: implications for crop yield enhancement and heterosis.</title>
        <authorList>
            <person name="Guo M."/>
            <person name="Rupe M.A."/>
            <person name="Dieter J.A."/>
            <person name="Zou J."/>
            <person name="Spielbauer D."/>
            <person name="Duncan K.E."/>
            <person name="Howard R.J."/>
            <person name="Hou Z."/>
            <person name="Simmons C.R."/>
        </authorList>
    </citation>
    <scope>NUCLEOTIDE SEQUENCE [MRNA]</scope>
    <scope>GENE FAMILY</scope>
    <scope>NOMENCLATURE</scope>
    <source>
        <strain>cv. B73</strain>
    </source>
</reference>
<evidence type="ECO:0000255" key="1"/>
<evidence type="ECO:0000305" key="2"/>
<protein>
    <recommendedName>
        <fullName>Cell number regulator 11</fullName>
    </recommendedName>
    <alternativeName>
        <fullName>ZmCNR11</fullName>
    </alternativeName>
</protein>
<dbReference type="EMBL" id="HM008663">
    <property type="protein sequence ID" value="ADI48425.1"/>
    <property type="molecule type" value="mRNA"/>
</dbReference>
<dbReference type="STRING" id="4577.D9HP27"/>
<dbReference type="InParanoid" id="D9HP27"/>
<dbReference type="Proteomes" id="UP000007305">
    <property type="component" value="Unplaced"/>
</dbReference>
<dbReference type="GO" id="GO:0016020">
    <property type="term" value="C:membrane"/>
    <property type="evidence" value="ECO:0007669"/>
    <property type="project" value="UniProtKB-SubCell"/>
</dbReference>
<dbReference type="InterPro" id="IPR006461">
    <property type="entry name" value="PLAC_motif_containing"/>
</dbReference>
<dbReference type="NCBIfam" id="TIGR01571">
    <property type="entry name" value="A_thal_Cys_rich"/>
    <property type="match status" value="1"/>
</dbReference>
<dbReference type="PANTHER" id="PTHR15907">
    <property type="entry name" value="DUF614 FAMILY PROTEIN-RELATED"/>
    <property type="match status" value="1"/>
</dbReference>
<dbReference type="Pfam" id="PF04749">
    <property type="entry name" value="PLAC8"/>
    <property type="match status" value="1"/>
</dbReference>
<comment type="subcellular location">
    <subcellularLocation>
        <location evidence="2">Membrane</location>
        <topology evidence="2">Multi-pass membrane protein</topology>
    </subcellularLocation>
</comment>
<comment type="similarity">
    <text evidence="2">Belongs to the cornifelin family.</text>
</comment>
<sequence>MDIMHGDLRRNGSNQSVPSRHGWIDMEALSPLADQSMPGEWSVGLCDCFGDLHTCCLTLWCPCVTFGRTAEIVDRGSTCCMSGTLYYLLSTIGWQWLYGCAKRSSMRSQYSLRESPCMDCCVHFWCGPCALCQEYTELQKRGFHMAKGISSPPHLPTV</sequence>
<keyword id="KW-0472">Membrane</keyword>
<keyword id="KW-1185">Reference proteome</keyword>
<keyword id="KW-0812">Transmembrane</keyword>
<keyword id="KW-1133">Transmembrane helix</keyword>
<feature type="chain" id="PRO_0000407739" description="Cell number regulator 11">
    <location>
        <begin position="1"/>
        <end position="158"/>
    </location>
</feature>
<feature type="transmembrane region" description="Helical" evidence="1">
    <location>
        <begin position="49"/>
        <end position="67"/>
    </location>
</feature>
<feature type="transmembrane region" description="Helical" evidence="1">
    <location>
        <begin position="78"/>
        <end position="94"/>
    </location>
</feature>